<dbReference type="EC" id="7.1.1.9"/>
<dbReference type="EMBL" id="AJ002189">
    <property type="protein sequence ID" value="CAA05231.1"/>
    <property type="molecule type" value="Genomic_DNA"/>
</dbReference>
<dbReference type="EMBL" id="AF034253">
    <property type="protein sequence ID" value="AAD34187.1"/>
    <property type="molecule type" value="Genomic_DNA"/>
</dbReference>
<dbReference type="EMBL" id="AF304203">
    <property type="protein sequence ID" value="AAG28218.1"/>
    <property type="molecule type" value="Genomic_DNA"/>
</dbReference>
<dbReference type="EMBL" id="AF304200">
    <property type="protein sequence ID" value="AAG28179.1"/>
    <property type="molecule type" value="Genomic_DNA"/>
</dbReference>
<dbReference type="PIR" id="T10974">
    <property type="entry name" value="T10974"/>
</dbReference>
<dbReference type="PDB" id="8UGH">
    <property type="method" value="EM"/>
    <property type="resolution" value="2.10 A"/>
    <property type="chains" value="4A=1-514"/>
</dbReference>
<dbReference type="PDB" id="8UGI">
    <property type="method" value="EM"/>
    <property type="resolution" value="2.10 A"/>
    <property type="chains" value="4A=1-514"/>
</dbReference>
<dbReference type="PDB" id="8UGJ">
    <property type="method" value="EM"/>
    <property type="resolution" value="2.30 A"/>
    <property type="chains" value="4A/8A=1-514"/>
</dbReference>
<dbReference type="PDB" id="8UGL">
    <property type="method" value="EM"/>
    <property type="resolution" value="3.00 A"/>
    <property type="chains" value="4A=1-514"/>
</dbReference>
<dbReference type="PDB" id="8UGN">
    <property type="method" value="EM"/>
    <property type="resolution" value="2.70 A"/>
    <property type="chains" value="4A/8A=1-514"/>
</dbReference>
<dbReference type="PDB" id="8UGR">
    <property type="method" value="EM"/>
    <property type="resolution" value="6.50 A"/>
    <property type="chains" value="4A/8A=1-514"/>
</dbReference>
<dbReference type="PDBsum" id="8UGH"/>
<dbReference type="PDBsum" id="8UGI"/>
<dbReference type="PDBsum" id="8UGJ"/>
<dbReference type="PDBsum" id="8UGL"/>
<dbReference type="PDBsum" id="8UGN"/>
<dbReference type="PDBsum" id="8UGR"/>
<dbReference type="EMDB" id="EMD-42225"/>
<dbReference type="EMDB" id="EMD-42226"/>
<dbReference type="EMDB" id="EMD-42227"/>
<dbReference type="EMDB" id="EMD-42229"/>
<dbReference type="EMDB" id="EMD-42230"/>
<dbReference type="EMDB" id="EMD-42233"/>
<dbReference type="SMR" id="O79876"/>
<dbReference type="FunCoup" id="O79876">
    <property type="interactions" value="103"/>
</dbReference>
<dbReference type="STRING" id="9823.ENSSSCP00000019137"/>
<dbReference type="PaxDb" id="9823-ENSSSCP00000019137"/>
<dbReference type="PeptideAtlas" id="O79876"/>
<dbReference type="Ensembl" id="ENSSSCT00000019670.1">
    <property type="protein sequence ID" value="ENSSSCP00000019137.1"/>
    <property type="gene ID" value="ENSSSCG00000018075.1"/>
</dbReference>
<dbReference type="Ensembl" id="ENSSSCT00070061672.1">
    <property type="protein sequence ID" value="ENSSSCP00070052580.1"/>
    <property type="gene ID" value="ENSSSCG00070030635.1"/>
</dbReference>
<dbReference type="Ensembl" id="ENSSSCT00085000017">
    <property type="protein sequence ID" value="ENSSSCP00085000004"/>
    <property type="gene ID" value="ENSSSCG00085000017"/>
</dbReference>
<dbReference type="Ensembl" id="ENSSSCT00090000017">
    <property type="protein sequence ID" value="ENSSSCP00090000004"/>
    <property type="gene ID" value="ENSSSCG00090000017"/>
</dbReference>
<dbReference type="Ensembl" id="ENSSSCT00105000017">
    <property type="protein sequence ID" value="ENSSSCP00105000004"/>
    <property type="gene ID" value="ENSSSCG00105000017"/>
</dbReference>
<dbReference type="Ensembl" id="ENSSSCT00110000017">
    <property type="protein sequence ID" value="ENSSSCP00110000004"/>
    <property type="gene ID" value="ENSSSCG00110000017"/>
</dbReference>
<dbReference type="Ensembl" id="ENSSSCT00115000017">
    <property type="protein sequence ID" value="ENSSSCP00115000004"/>
    <property type="gene ID" value="ENSSSCG00115000017"/>
</dbReference>
<dbReference type="Ensembl" id="ENSSSCT00130000017">
    <property type="protein sequence ID" value="ENSSSCP00130000004"/>
    <property type="gene ID" value="ENSSSCG00130000017"/>
</dbReference>
<dbReference type="KEGG" id="ssc:808503"/>
<dbReference type="CTD" id="4512"/>
<dbReference type="VGNC" id="VGNC:99790">
    <property type="gene designation" value="MT-CO1"/>
</dbReference>
<dbReference type="eggNOG" id="KOG4769">
    <property type="taxonomic scope" value="Eukaryota"/>
</dbReference>
<dbReference type="GeneTree" id="ENSGT00390000001518"/>
<dbReference type="HOGENOM" id="CLU_011899_7_3_1"/>
<dbReference type="InParanoid" id="O79876"/>
<dbReference type="OMA" id="WAMMSIG"/>
<dbReference type="OrthoDB" id="10002679at2759"/>
<dbReference type="TreeFam" id="TF353096"/>
<dbReference type="Reactome" id="R-SSC-5628897">
    <property type="pathway name" value="TP53 Regulates Metabolic Genes"/>
</dbReference>
<dbReference type="Reactome" id="R-SSC-611105">
    <property type="pathway name" value="Respiratory electron transport"/>
</dbReference>
<dbReference type="Reactome" id="R-SSC-9707564">
    <property type="pathway name" value="Cytoprotection by HMOX1"/>
</dbReference>
<dbReference type="Reactome" id="R-SSC-9837999">
    <property type="pathway name" value="Mitochondrial protein degradation"/>
</dbReference>
<dbReference type="Reactome" id="R-SSC-9864848">
    <property type="pathway name" value="Complex IV assembly"/>
</dbReference>
<dbReference type="UniPathway" id="UPA00705"/>
<dbReference type="Proteomes" id="UP000008227">
    <property type="component" value="Mitochondrion"/>
</dbReference>
<dbReference type="Proteomes" id="UP000314985">
    <property type="component" value="Mitochondrion"/>
</dbReference>
<dbReference type="Proteomes" id="UP000694570">
    <property type="component" value="Unplaced"/>
</dbReference>
<dbReference type="Proteomes" id="UP000694571">
    <property type="component" value="Unplaced"/>
</dbReference>
<dbReference type="Proteomes" id="UP000694720">
    <property type="component" value="Unplaced"/>
</dbReference>
<dbReference type="Proteomes" id="UP000694722">
    <property type="component" value="Unplaced"/>
</dbReference>
<dbReference type="Proteomes" id="UP000694723">
    <property type="component" value="Unplaced"/>
</dbReference>
<dbReference type="Proteomes" id="UP000694724">
    <property type="component" value="Unplaced"/>
</dbReference>
<dbReference type="Proteomes" id="UP000694725">
    <property type="component" value="Unplaced"/>
</dbReference>
<dbReference type="Proteomes" id="UP000694726">
    <property type="component" value="Unplaced"/>
</dbReference>
<dbReference type="Proteomes" id="UP000694727">
    <property type="component" value="Unplaced"/>
</dbReference>
<dbReference type="Proteomes" id="UP000694728">
    <property type="component" value="Unplaced"/>
</dbReference>
<dbReference type="Bgee" id="ENSSSCG00000018075">
    <property type="expression patterns" value="Expressed in oocyte and 44 other cell types or tissues"/>
</dbReference>
<dbReference type="ExpressionAtlas" id="O79876">
    <property type="expression patterns" value="baseline and differential"/>
</dbReference>
<dbReference type="GO" id="GO:0005743">
    <property type="term" value="C:mitochondrial inner membrane"/>
    <property type="evidence" value="ECO:0007669"/>
    <property type="project" value="UniProtKB-SubCell"/>
</dbReference>
<dbReference type="GO" id="GO:0045277">
    <property type="term" value="C:respiratory chain complex IV"/>
    <property type="evidence" value="ECO:0000250"/>
    <property type="project" value="UniProtKB"/>
</dbReference>
<dbReference type="GO" id="GO:0004129">
    <property type="term" value="F:cytochrome-c oxidase activity"/>
    <property type="evidence" value="ECO:0007669"/>
    <property type="project" value="UniProtKB-EC"/>
</dbReference>
<dbReference type="GO" id="GO:0020037">
    <property type="term" value="F:heme binding"/>
    <property type="evidence" value="ECO:0007669"/>
    <property type="project" value="InterPro"/>
</dbReference>
<dbReference type="GO" id="GO:0046872">
    <property type="term" value="F:metal ion binding"/>
    <property type="evidence" value="ECO:0007669"/>
    <property type="project" value="UniProtKB-KW"/>
</dbReference>
<dbReference type="GO" id="GO:0009060">
    <property type="term" value="P:aerobic respiration"/>
    <property type="evidence" value="ECO:0000318"/>
    <property type="project" value="GO_Central"/>
</dbReference>
<dbReference type="GO" id="GO:0006119">
    <property type="term" value="P:oxidative phosphorylation"/>
    <property type="evidence" value="ECO:0007669"/>
    <property type="project" value="UniProtKB-UniPathway"/>
</dbReference>
<dbReference type="GO" id="GO:0022904">
    <property type="term" value="P:respiratory electron transport chain"/>
    <property type="evidence" value="ECO:0000318"/>
    <property type="project" value="GO_Central"/>
</dbReference>
<dbReference type="CDD" id="cd01663">
    <property type="entry name" value="Cyt_c_Oxidase_I"/>
    <property type="match status" value="1"/>
</dbReference>
<dbReference type="FunFam" id="1.20.210.10:FF:000001">
    <property type="entry name" value="Cytochrome c oxidase subunit 1"/>
    <property type="match status" value="1"/>
</dbReference>
<dbReference type="Gene3D" id="1.20.210.10">
    <property type="entry name" value="Cytochrome c oxidase-like, subunit I domain"/>
    <property type="match status" value="1"/>
</dbReference>
<dbReference type="InterPro" id="IPR023616">
    <property type="entry name" value="Cyt_c_oxase-like_su1_dom"/>
</dbReference>
<dbReference type="InterPro" id="IPR036927">
    <property type="entry name" value="Cyt_c_oxase-like_su1_sf"/>
</dbReference>
<dbReference type="InterPro" id="IPR000883">
    <property type="entry name" value="Cyt_C_Oxase_1"/>
</dbReference>
<dbReference type="InterPro" id="IPR023615">
    <property type="entry name" value="Cyt_c_Oxase_su1_BS"/>
</dbReference>
<dbReference type="InterPro" id="IPR033944">
    <property type="entry name" value="Cyt_c_oxase_su1_dom"/>
</dbReference>
<dbReference type="PANTHER" id="PTHR10422">
    <property type="entry name" value="CYTOCHROME C OXIDASE SUBUNIT 1"/>
    <property type="match status" value="1"/>
</dbReference>
<dbReference type="PANTHER" id="PTHR10422:SF18">
    <property type="entry name" value="CYTOCHROME C OXIDASE SUBUNIT 1"/>
    <property type="match status" value="1"/>
</dbReference>
<dbReference type="Pfam" id="PF00115">
    <property type="entry name" value="COX1"/>
    <property type="match status" value="1"/>
</dbReference>
<dbReference type="PRINTS" id="PR01165">
    <property type="entry name" value="CYCOXIDASEI"/>
</dbReference>
<dbReference type="SUPFAM" id="SSF81442">
    <property type="entry name" value="Cytochrome c oxidase subunit I-like"/>
    <property type="match status" value="1"/>
</dbReference>
<dbReference type="PROSITE" id="PS50855">
    <property type="entry name" value="COX1"/>
    <property type="match status" value="1"/>
</dbReference>
<dbReference type="PROSITE" id="PS00077">
    <property type="entry name" value="COX1_CUB"/>
    <property type="match status" value="1"/>
</dbReference>
<feature type="chain" id="PRO_0000183391" description="Cytochrome c oxidase subunit 1">
    <location>
        <begin position="1"/>
        <end position="514"/>
    </location>
</feature>
<feature type="topological domain" description="Mitochondrial matrix" evidence="2">
    <location>
        <begin position="1"/>
        <end position="11"/>
    </location>
</feature>
<feature type="transmembrane region" description="Helical; Name=I" evidence="2">
    <location>
        <begin position="12"/>
        <end position="40"/>
    </location>
</feature>
<feature type="topological domain" description="Mitochondrial intermembrane" evidence="2">
    <location>
        <begin position="41"/>
        <end position="50"/>
    </location>
</feature>
<feature type="transmembrane region" description="Helical; Name=II" evidence="2">
    <location>
        <begin position="51"/>
        <end position="86"/>
    </location>
</feature>
<feature type="topological domain" description="Mitochondrial matrix" evidence="2">
    <location>
        <begin position="87"/>
        <end position="94"/>
    </location>
</feature>
<feature type="transmembrane region" description="Helical; Name=III" evidence="2">
    <location>
        <begin position="95"/>
        <end position="117"/>
    </location>
</feature>
<feature type="topological domain" description="Mitochondrial intermembrane" evidence="2">
    <location>
        <begin position="118"/>
        <end position="140"/>
    </location>
</feature>
<feature type="transmembrane region" description="Helical; Name=IV" evidence="2">
    <location>
        <begin position="141"/>
        <end position="170"/>
    </location>
</feature>
<feature type="topological domain" description="Mitochondrial matrix" evidence="2">
    <location>
        <begin position="171"/>
        <end position="182"/>
    </location>
</feature>
<feature type="transmembrane region" description="Helical; Name=V" evidence="2">
    <location>
        <begin position="183"/>
        <end position="212"/>
    </location>
</feature>
<feature type="topological domain" description="Mitochondrial intermembrane" evidence="2">
    <location>
        <begin position="213"/>
        <end position="227"/>
    </location>
</feature>
<feature type="transmembrane region" description="Helical; Name=VI" evidence="2">
    <location>
        <begin position="228"/>
        <end position="261"/>
    </location>
</feature>
<feature type="topological domain" description="Mitochondrial matrix" evidence="2">
    <location>
        <begin position="262"/>
        <end position="269"/>
    </location>
</feature>
<feature type="transmembrane region" description="Helical; Name=VII" evidence="2">
    <location>
        <begin position="270"/>
        <end position="286"/>
    </location>
</feature>
<feature type="topological domain" description="Mitochondrial intermembrane" evidence="2">
    <location>
        <begin position="287"/>
        <end position="298"/>
    </location>
</feature>
<feature type="transmembrane region" description="Helical; Name=VIII" evidence="2">
    <location>
        <begin position="299"/>
        <end position="327"/>
    </location>
</feature>
<feature type="topological domain" description="Mitochondrial matrix" evidence="2">
    <location>
        <begin position="328"/>
        <end position="335"/>
    </location>
</feature>
<feature type="transmembrane region" description="Helical; Name=IX" evidence="2">
    <location>
        <begin position="336"/>
        <end position="357"/>
    </location>
</feature>
<feature type="topological domain" description="Mitochondrial intermembrane" evidence="2">
    <location>
        <begin position="358"/>
        <end position="370"/>
    </location>
</feature>
<feature type="transmembrane region" description="Helical; Name=X" evidence="2">
    <location>
        <begin position="371"/>
        <end position="400"/>
    </location>
</feature>
<feature type="topological domain" description="Mitochondrial matrix" evidence="2">
    <location>
        <begin position="401"/>
        <end position="406"/>
    </location>
</feature>
<feature type="transmembrane region" description="Helical; Name=XI" evidence="2">
    <location>
        <begin position="407"/>
        <end position="433"/>
    </location>
</feature>
<feature type="topological domain" description="Mitochondrial intermembrane" evidence="2">
    <location>
        <begin position="434"/>
        <end position="446"/>
    </location>
</feature>
<feature type="transmembrane region" description="Helical; Name=XII" evidence="2">
    <location>
        <begin position="447"/>
        <end position="478"/>
    </location>
</feature>
<feature type="topological domain" description="Mitochondrial matrix" evidence="2">
    <location>
        <begin position="479"/>
        <end position="514"/>
    </location>
</feature>
<feature type="binding site" evidence="2">
    <location>
        <position position="40"/>
    </location>
    <ligand>
        <name>Na(+)</name>
        <dbReference type="ChEBI" id="CHEBI:29101"/>
    </ligand>
</feature>
<feature type="binding site" evidence="2">
    <location>
        <position position="45"/>
    </location>
    <ligand>
        <name>Na(+)</name>
        <dbReference type="ChEBI" id="CHEBI:29101"/>
    </ligand>
</feature>
<feature type="binding site" description="axial binding residue" evidence="2">
    <location>
        <position position="61"/>
    </location>
    <ligand>
        <name>Fe(II)-heme a</name>
        <dbReference type="ChEBI" id="CHEBI:61715"/>
        <note>low-spin</note>
    </ligand>
    <ligandPart>
        <name>Fe</name>
        <dbReference type="ChEBI" id="CHEBI:18248"/>
    </ligandPart>
</feature>
<feature type="binding site" evidence="2">
    <location>
        <position position="240"/>
    </location>
    <ligand>
        <name>Cu cation</name>
        <dbReference type="ChEBI" id="CHEBI:23378"/>
        <label>B</label>
    </ligand>
</feature>
<feature type="binding site" evidence="2">
    <location>
        <position position="244"/>
    </location>
    <ligand>
        <name>O2</name>
        <dbReference type="ChEBI" id="CHEBI:15379"/>
    </ligand>
</feature>
<feature type="binding site" evidence="2">
    <location>
        <position position="290"/>
    </location>
    <ligand>
        <name>Cu cation</name>
        <dbReference type="ChEBI" id="CHEBI:23378"/>
        <label>B</label>
    </ligand>
</feature>
<feature type="binding site" evidence="2">
    <location>
        <position position="291"/>
    </location>
    <ligand>
        <name>Cu cation</name>
        <dbReference type="ChEBI" id="CHEBI:23378"/>
        <label>B</label>
    </ligand>
</feature>
<feature type="binding site" evidence="2">
    <location>
        <position position="368"/>
    </location>
    <ligand>
        <name>Mg(2+)</name>
        <dbReference type="ChEBI" id="CHEBI:18420"/>
        <note>ligand shared with MT-CO2</note>
    </ligand>
</feature>
<feature type="binding site" evidence="2">
    <location>
        <position position="369"/>
    </location>
    <ligand>
        <name>Mg(2+)</name>
        <dbReference type="ChEBI" id="CHEBI:18420"/>
        <note>ligand shared with MT-CO2</note>
    </ligand>
</feature>
<feature type="binding site" description="axial binding residue" evidence="2">
    <location>
        <position position="376"/>
    </location>
    <ligand>
        <name>heme a3</name>
        <dbReference type="ChEBI" id="CHEBI:83282"/>
        <note>high-spin</note>
    </ligand>
    <ligandPart>
        <name>Fe</name>
        <dbReference type="ChEBI" id="CHEBI:18248"/>
    </ligandPart>
</feature>
<feature type="binding site" description="axial binding residue" evidence="2">
    <location>
        <position position="378"/>
    </location>
    <ligand>
        <name>Fe(II)-heme a</name>
        <dbReference type="ChEBI" id="CHEBI:61715"/>
        <note>low-spin</note>
    </ligand>
    <ligandPart>
        <name>Fe</name>
        <dbReference type="ChEBI" id="CHEBI:18248"/>
    </ligandPart>
</feature>
<feature type="binding site" evidence="2">
    <location>
        <position position="441"/>
    </location>
    <ligand>
        <name>Na(+)</name>
        <dbReference type="ChEBI" id="CHEBI:29101"/>
    </ligand>
</feature>
<feature type="cross-link" description="1'-histidyl-3'-tyrosine (His-Tyr)" evidence="2">
    <location>
        <begin position="240"/>
        <end position="244"/>
    </location>
</feature>
<feature type="sequence conflict" description="In Ref. 1; CAA05231." evidence="4" ref="1">
    <original>GD</original>
    <variation>PH</variation>
    <location>
        <begin position="49"/>
        <end position="50"/>
    </location>
</feature>
<gene>
    <name type="primary">MT-CO1</name>
    <name type="synonym">COI</name>
    <name type="synonym">COXI</name>
    <name type="synonym">MTCO1</name>
</gene>
<protein>
    <recommendedName>
        <fullName>Cytochrome c oxidase subunit 1</fullName>
        <ecNumber>7.1.1.9</ecNumber>
    </recommendedName>
    <alternativeName>
        <fullName>Cytochrome c oxidase polypeptide I</fullName>
    </alternativeName>
</protein>
<geneLocation type="mitochondrion"/>
<keyword id="KW-0002">3D-structure</keyword>
<keyword id="KW-0106">Calcium</keyword>
<keyword id="KW-0186">Copper</keyword>
<keyword id="KW-0249">Electron transport</keyword>
<keyword id="KW-0349">Heme</keyword>
<keyword id="KW-0408">Iron</keyword>
<keyword id="KW-0460">Magnesium</keyword>
<keyword id="KW-0472">Membrane</keyword>
<keyword id="KW-0479">Metal-binding</keyword>
<keyword id="KW-0496">Mitochondrion</keyword>
<keyword id="KW-0999">Mitochondrion inner membrane</keyword>
<keyword id="KW-1185">Reference proteome</keyword>
<keyword id="KW-0679">Respiratory chain</keyword>
<keyword id="KW-0915">Sodium</keyword>
<keyword id="KW-1278">Translocase</keyword>
<keyword id="KW-0812">Transmembrane</keyword>
<keyword id="KW-1133">Transmembrane helix</keyword>
<keyword id="KW-0813">Transport</keyword>
<reference key="1">
    <citation type="journal article" date="1998" name="J. Mol. Evol.">
        <title>The complete mitochondrial DNA sequence of the pig (Sus scrofa).</title>
        <authorList>
            <person name="Ursing B.M."/>
            <person name="Arnason U."/>
        </authorList>
    </citation>
    <scope>NUCLEOTIDE SEQUENCE [GENOMIC DNA]</scope>
</reference>
<reference key="2">
    <citation type="journal article" date="1999" name="Gene">
        <title>Complete nucleotide sequence of pig (Sus scrofa) mitochondrial genome and dating evolutionary divergence within artiodactyla.</title>
        <authorList>
            <person name="Lin C.S."/>
            <person name="Sun Y.L."/>
            <person name="Liu C.Y."/>
            <person name="Yang P.C."/>
            <person name="Chang L.C."/>
            <person name="Cheng I.C."/>
            <person name="Mao S.J.T."/>
            <person name="Huang M.C."/>
        </authorList>
    </citation>
    <scope>NUCLEOTIDE SEQUENCE [LARGE SCALE GENOMIC DNA]</scope>
    <source>
        <strain>Landrace</strain>
    </source>
</reference>
<reference key="3">
    <citation type="journal article" date="2001" name="J. Mol. Evol.">
        <title>A phylogenetic study of the origin of the domestic pig estimated from the near-complete mtDNA genome.</title>
        <authorList>
            <person name="Kijas J.M.H."/>
            <person name="Andersson L."/>
        </authorList>
    </citation>
    <scope>NUCLEOTIDE SEQUENCE [GENOMIC DNA]</scope>
    <source>
        <strain>Meishan</strain>
        <strain>Swedish wild boar</strain>
    </source>
</reference>
<evidence type="ECO:0000250" key="1">
    <source>
        <dbReference type="UniProtKB" id="P00395"/>
    </source>
</evidence>
<evidence type="ECO:0000250" key="2">
    <source>
        <dbReference type="UniProtKB" id="P00396"/>
    </source>
</evidence>
<evidence type="ECO:0000250" key="3">
    <source>
        <dbReference type="UniProtKB" id="P00401"/>
    </source>
</evidence>
<evidence type="ECO:0000305" key="4"/>
<name>COX1_PIG</name>
<comment type="function">
    <text evidence="3">Component of the cytochrome c oxidase, the last enzyme in the mitochondrial electron transport chain which drives oxidative phosphorylation. The respiratory chain contains 3 multisubunit complexes succinate dehydrogenase (complex II, CII), ubiquinol-cytochrome c oxidoreductase (cytochrome b-c1 complex, complex III, CIII) and cytochrome c oxidase (complex IV, CIV), that cooperate to transfer electrons derived from NADH and succinate to molecular oxygen, creating an electrochemical gradient over the inner membrane that drives transmembrane transport and the ATP synthase. Cytochrome c oxidase is the component of the respiratory chain that catalyzes the reduction of oxygen to water. Electrons originating from reduced cytochrome c in the intermembrane space (IMS) are transferred via the dinuclear copper A center (CU(A)) of subunit 2 and heme A of subunit 1 to the active site in subunit 1, a binuclear center (BNC) formed by heme A3 and copper B (CU(B)). The BNC reduces molecular oxygen to 2 water molecules using 4 electrons from cytochrome c in the IMS and 4 protons from the mitochondrial matrix.</text>
</comment>
<comment type="catalytic activity">
    <reaction evidence="3">
        <text>4 Fe(II)-[cytochrome c] + O2 + 8 H(+)(in) = 4 Fe(III)-[cytochrome c] + 2 H2O + 4 H(+)(out)</text>
        <dbReference type="Rhea" id="RHEA:11436"/>
        <dbReference type="Rhea" id="RHEA-COMP:10350"/>
        <dbReference type="Rhea" id="RHEA-COMP:14399"/>
        <dbReference type="ChEBI" id="CHEBI:15377"/>
        <dbReference type="ChEBI" id="CHEBI:15378"/>
        <dbReference type="ChEBI" id="CHEBI:15379"/>
        <dbReference type="ChEBI" id="CHEBI:29033"/>
        <dbReference type="ChEBI" id="CHEBI:29034"/>
        <dbReference type="EC" id="7.1.1.9"/>
    </reaction>
    <physiologicalReaction direction="left-to-right" evidence="3">
        <dbReference type="Rhea" id="RHEA:11437"/>
    </physiologicalReaction>
</comment>
<comment type="cofactor">
    <cofactor evidence="2">
        <name>heme</name>
        <dbReference type="ChEBI" id="CHEBI:30413"/>
    </cofactor>
    <text evidence="2">Binds 2 heme A groups non-covalently per subunit.</text>
</comment>
<comment type="cofactor">
    <cofactor evidence="2">
        <name>Cu cation</name>
        <dbReference type="ChEBI" id="CHEBI:23378"/>
    </cofactor>
    <text evidence="2">Binds a copper B center.</text>
</comment>
<comment type="pathway">
    <text evidence="3">Energy metabolism; oxidative phosphorylation.</text>
</comment>
<comment type="subunit">
    <text evidence="1 2">Component of the cytochrome c oxidase (complex IV, CIV), a multisubunit enzyme composed of 14 subunits. The complex is composed of a catalytic core of 3 subunits MT-CO1, MT-CO2 and MT-CO3, encoded in the mitochondrial DNA, and 11 supernumerary subunits COX4I, COX5A, COX5B, COX6A, COX6B, COX6C, COX7A, COX7B, COX7C, COX8 and NDUFA4, which are encoded in the nuclear genome. The complex exists as a monomer or a dimer and forms supercomplexes (SCs) in the inner mitochondrial membrane with NADH-ubiquinone oxidoreductase (complex I, CI) and ubiquinol-cytochrome c oxidoreductase (cytochrome b-c1 complex, complex III, CIII), resulting in different assemblies (supercomplex SCI(1)III(2)IV(1) and megacomplex MCI(2)III(2)IV(2)) (By similarity). As a newly synthesized protein, rapidly incorporates into a multi-subunit assembly intermediate in the inner membrane, called MITRAC (mitochondrial translation regulation assembly intermediate of cytochrome c oxidase) complex, whose core components are COA3/MITRAC12 and COX14. Within the MITRAC complex, interacts with COA3 and with SMIM20/MITRAC7; the interaction with SMIM20 stabilizes the newly synthesized MT-CO1 and prevents its premature turnover. Interacts with TMEM177 in a COX20-dependent manner (By similarity).</text>
</comment>
<comment type="subcellular location">
    <subcellularLocation>
        <location evidence="2">Mitochondrion inner membrane</location>
        <topology evidence="2">Multi-pass membrane protein</topology>
    </subcellularLocation>
</comment>
<comment type="similarity">
    <text evidence="4">Belongs to the heme-copper respiratory oxidase family.</text>
</comment>
<organism>
    <name type="scientific">Sus scrofa</name>
    <name type="common">Pig</name>
    <dbReference type="NCBI Taxonomy" id="9823"/>
    <lineage>
        <taxon>Eukaryota</taxon>
        <taxon>Metazoa</taxon>
        <taxon>Chordata</taxon>
        <taxon>Craniata</taxon>
        <taxon>Vertebrata</taxon>
        <taxon>Euteleostomi</taxon>
        <taxon>Mammalia</taxon>
        <taxon>Eutheria</taxon>
        <taxon>Laurasiatheria</taxon>
        <taxon>Artiodactyla</taxon>
        <taxon>Suina</taxon>
        <taxon>Suidae</taxon>
        <taxon>Sus</taxon>
    </lineage>
</organism>
<accession>O79876</accession>
<accession>Q9TDR4</accession>
<sequence>MFVNRWLYSTNHKDIGTLYLLFGAWAGMVGTALSLLIRAELGQPGTLLGDDQIYNVIVTAHAFVMIFFMVMPIMIGGFGNWLVPLMIGAPDMAFPRMNNMSFWLLPPSFLLLLASSMVEAGAGTGWTVYPPLAGNLAHAGASVDLTIFSLHLAGVSSILGAINFITTIINMKPPAMSQYQTPLFVWSVLITAVLLLLSLPVLAAGITMLLTDRNLNTTFFDPAGGGDPILYQHLFWFFGHPEVYILILPGFGMISHIVTYYSGKKEPFGYMGMVWAMMSIGFLGFIVWAHHMFTVGMDVDTRAYFTSATMIIAIPTGVKVFSWLATLHGGNIKWSPAMLWALGFIFLFTVGGLTGIVLANSSLDIVLHDTYYVVAHFHYVLSMGAVFAIMGGFVHWFPLFSGYTLNQAWAKIHFVIMFVGVNMTFFPQHFLGLSGMPRRYSDYPDAYTAWNTISSMGSFISLTAVMLMIFIIWEAFASKREVSAVELTSTNLEWLHGCPPPYHTFEEPTYINLK</sequence>
<proteinExistence type="evidence at protein level"/>